<comment type="catalytic activity">
    <reaction evidence="1">
        <text>tRNA(Phe) + L-phenylalanine + ATP = L-phenylalanyl-tRNA(Phe) + AMP + diphosphate + H(+)</text>
        <dbReference type="Rhea" id="RHEA:19413"/>
        <dbReference type="Rhea" id="RHEA-COMP:9668"/>
        <dbReference type="Rhea" id="RHEA-COMP:9699"/>
        <dbReference type="ChEBI" id="CHEBI:15378"/>
        <dbReference type="ChEBI" id="CHEBI:30616"/>
        <dbReference type="ChEBI" id="CHEBI:33019"/>
        <dbReference type="ChEBI" id="CHEBI:58095"/>
        <dbReference type="ChEBI" id="CHEBI:78442"/>
        <dbReference type="ChEBI" id="CHEBI:78531"/>
        <dbReference type="ChEBI" id="CHEBI:456215"/>
        <dbReference type="EC" id="6.1.1.20"/>
    </reaction>
</comment>
<comment type="cofactor">
    <cofactor evidence="1">
        <name>Mg(2+)</name>
        <dbReference type="ChEBI" id="CHEBI:18420"/>
    </cofactor>
    <text evidence="1">Binds 2 magnesium ions per tetramer.</text>
</comment>
<comment type="subunit">
    <text evidence="1">Tetramer of two alpha and two beta subunits.</text>
</comment>
<comment type="subcellular location">
    <subcellularLocation>
        <location evidence="1">Cytoplasm</location>
    </subcellularLocation>
</comment>
<comment type="similarity">
    <text evidence="1">Belongs to the phenylalanyl-tRNA synthetase beta subunit family. Type 1 subfamily.</text>
</comment>
<reference key="1">
    <citation type="journal article" date="2003" name="Proc. Natl. Acad. Sci. U.S.A.">
        <title>The complete genome sequence of Mycobacterium bovis.</title>
        <authorList>
            <person name="Garnier T."/>
            <person name="Eiglmeier K."/>
            <person name="Camus J.-C."/>
            <person name="Medina N."/>
            <person name="Mansoor H."/>
            <person name="Pryor M."/>
            <person name="Duthoy S."/>
            <person name="Grondin S."/>
            <person name="Lacroix C."/>
            <person name="Monsempe C."/>
            <person name="Simon S."/>
            <person name="Harris B."/>
            <person name="Atkin R."/>
            <person name="Doggett J."/>
            <person name="Mayes R."/>
            <person name="Keating L."/>
            <person name="Wheeler P.R."/>
            <person name="Parkhill J."/>
            <person name="Barrell B.G."/>
            <person name="Cole S.T."/>
            <person name="Gordon S.V."/>
            <person name="Hewinson R.G."/>
        </authorList>
    </citation>
    <scope>NUCLEOTIDE SEQUENCE [LARGE SCALE GENOMIC DNA]</scope>
    <source>
        <strain>ATCC BAA-935 / AF2122/97</strain>
    </source>
</reference>
<reference key="2">
    <citation type="journal article" date="2017" name="Genome Announc.">
        <title>Updated reference genome sequence and annotation of Mycobacterium bovis AF2122/97.</title>
        <authorList>
            <person name="Malone K.M."/>
            <person name="Farrell D."/>
            <person name="Stuber T.P."/>
            <person name="Schubert O.T."/>
            <person name="Aebersold R."/>
            <person name="Robbe-Austerman S."/>
            <person name="Gordon S.V."/>
        </authorList>
    </citation>
    <scope>NUCLEOTIDE SEQUENCE [LARGE SCALE GENOMIC DNA]</scope>
    <scope>GENOME REANNOTATION</scope>
    <source>
        <strain>ATCC BAA-935 / AF2122/97</strain>
    </source>
</reference>
<organism>
    <name type="scientific">Mycobacterium bovis (strain ATCC BAA-935 / AF2122/97)</name>
    <dbReference type="NCBI Taxonomy" id="233413"/>
    <lineage>
        <taxon>Bacteria</taxon>
        <taxon>Bacillati</taxon>
        <taxon>Actinomycetota</taxon>
        <taxon>Actinomycetes</taxon>
        <taxon>Mycobacteriales</taxon>
        <taxon>Mycobacteriaceae</taxon>
        <taxon>Mycobacterium</taxon>
        <taxon>Mycobacterium tuberculosis complex</taxon>
    </lineage>
</organism>
<evidence type="ECO:0000255" key="1">
    <source>
        <dbReference type="HAMAP-Rule" id="MF_00283"/>
    </source>
</evidence>
<accession>Q7VEV3</accession>
<accession>A0A1R3XYW2</accession>
<accession>X2BIJ8</accession>
<feature type="chain" id="PRO_0000126911" description="Phenylalanine--tRNA ligase beta subunit">
    <location>
        <begin position="1"/>
        <end position="831"/>
    </location>
</feature>
<feature type="domain" description="tRNA-binding" evidence="1">
    <location>
        <begin position="44"/>
        <end position="155"/>
    </location>
</feature>
<feature type="domain" description="B5" evidence="1">
    <location>
        <begin position="414"/>
        <end position="489"/>
    </location>
</feature>
<feature type="domain" description="FDX-ACB" evidence="1">
    <location>
        <begin position="737"/>
        <end position="830"/>
    </location>
</feature>
<feature type="binding site" evidence="1">
    <location>
        <position position="467"/>
    </location>
    <ligand>
        <name>Mg(2+)</name>
        <dbReference type="ChEBI" id="CHEBI:18420"/>
        <note>shared with alpha subunit</note>
    </ligand>
</feature>
<feature type="binding site" evidence="1">
    <location>
        <position position="473"/>
    </location>
    <ligand>
        <name>Mg(2+)</name>
        <dbReference type="ChEBI" id="CHEBI:18420"/>
        <note>shared with alpha subunit</note>
    </ligand>
</feature>
<feature type="binding site" evidence="1">
    <location>
        <position position="476"/>
    </location>
    <ligand>
        <name>Mg(2+)</name>
        <dbReference type="ChEBI" id="CHEBI:18420"/>
        <note>shared with alpha subunit</note>
    </ligand>
</feature>
<feature type="binding site" evidence="1">
    <location>
        <position position="477"/>
    </location>
    <ligand>
        <name>Mg(2+)</name>
        <dbReference type="ChEBI" id="CHEBI:18420"/>
        <note>shared with alpha subunit</note>
    </ligand>
</feature>
<sequence length="831" mass="88402">MRLPYSWLREVVAVGASGWDVTPGELEQTLLRIGHEVEEVIPLGPVDGPVTVGRVADIEELTGYKKPIRACAVDIGDRQYREIICGATNFAVGDLVVVALPGATLPGGFTISARKAYGRNSDGMICSAAELNLGADHSGILVLPPGAAEPGADGAGVLGLDDVVFHLAITPDRGYCMSVRGLARELACAYDLDFVDPASNSRVPPLPIEGPVWPLTVQPETGVRRFALRPVIGIDPAAVSPWWLQRRLLLCGIRATCPAVDVTNYVMLELGHPMHAHDRNRISGTLGVRFARSGETAVTLDGIERKLDTADVLIVDDAATAAIGGVMGAASTEVRADSTDVLLEAAIWDPAAVSRTQRRLHLPSEAARRYERTVDPAISVAALDRCARLLADIAGGEVSPTLTDWRGDPPCDDWSPPPIRMGVDVPDRIAGVAYPQGTTARRLAQIGAVVTHDGDTLTVTPPSWRPDLRQPADLVEEVLRLEGLEVIPSVLPPAPAGRGLTAGQQRRRTIGRSLALSGYVEILPTPFLPAGVFDLWGLEADDSRRMTTRVLNPLEADRPQLATTLLPALLEALVRNVSRGLVDVALFAIAQVVQPTEQTRGVGLIPVDRRPTDDEIAMLDASLPRQPQHVAAVLAGLREPRGPWGPGRPVEAADAFEAVRIIARASRVDVTLRPAQYLPWHPGRCAQVFVGESSVGHAGQLHPAVIERSGLPKGTCAVELNLDAIPCSAPLPAPRVSPYPAVFQDVSLVVAADIPAQAVADAVRAGAGDLLEDIALFDVFTGPQIGEHRKSLTFALRFRAPDRTLTEDDASAARDAAVQSAAERVGAVLRG</sequence>
<gene>
    <name evidence="1" type="primary">pheT</name>
    <name type="ordered locus">BQ2027_MB1677</name>
</gene>
<proteinExistence type="inferred from homology"/>
<protein>
    <recommendedName>
        <fullName evidence="1">Phenylalanine--tRNA ligase beta subunit</fullName>
        <ecNumber evidence="1">6.1.1.20</ecNumber>
    </recommendedName>
    <alternativeName>
        <fullName evidence="1">Phenylalanyl-tRNA synthetase beta subunit</fullName>
        <shortName evidence="1">PheRS</shortName>
    </alternativeName>
</protein>
<keyword id="KW-0030">Aminoacyl-tRNA synthetase</keyword>
<keyword id="KW-0067">ATP-binding</keyword>
<keyword id="KW-0963">Cytoplasm</keyword>
<keyword id="KW-0436">Ligase</keyword>
<keyword id="KW-0460">Magnesium</keyword>
<keyword id="KW-0479">Metal-binding</keyword>
<keyword id="KW-0547">Nucleotide-binding</keyword>
<keyword id="KW-0648">Protein biosynthesis</keyword>
<keyword id="KW-1185">Reference proteome</keyword>
<keyword id="KW-0694">RNA-binding</keyword>
<keyword id="KW-0820">tRNA-binding</keyword>
<dbReference type="EC" id="6.1.1.20" evidence="1"/>
<dbReference type="EMBL" id="LT708304">
    <property type="protein sequence ID" value="SIU00281.1"/>
    <property type="molecule type" value="Genomic_DNA"/>
</dbReference>
<dbReference type="RefSeq" id="NP_855330.1">
    <property type="nucleotide sequence ID" value="NC_002945.3"/>
</dbReference>
<dbReference type="RefSeq" id="WP_003408148.1">
    <property type="nucleotide sequence ID" value="NC_002945.4"/>
</dbReference>
<dbReference type="SMR" id="Q7VEV3"/>
<dbReference type="KEGG" id="mbo:BQ2027_MB1677"/>
<dbReference type="PATRIC" id="fig|233413.5.peg.1830"/>
<dbReference type="Proteomes" id="UP000001419">
    <property type="component" value="Chromosome"/>
</dbReference>
<dbReference type="GO" id="GO:0009328">
    <property type="term" value="C:phenylalanine-tRNA ligase complex"/>
    <property type="evidence" value="ECO:0007669"/>
    <property type="project" value="TreeGrafter"/>
</dbReference>
<dbReference type="GO" id="GO:0005524">
    <property type="term" value="F:ATP binding"/>
    <property type="evidence" value="ECO:0007669"/>
    <property type="project" value="UniProtKB-UniRule"/>
</dbReference>
<dbReference type="GO" id="GO:0000287">
    <property type="term" value="F:magnesium ion binding"/>
    <property type="evidence" value="ECO:0007669"/>
    <property type="project" value="UniProtKB-UniRule"/>
</dbReference>
<dbReference type="GO" id="GO:0004826">
    <property type="term" value="F:phenylalanine-tRNA ligase activity"/>
    <property type="evidence" value="ECO:0007669"/>
    <property type="project" value="UniProtKB-UniRule"/>
</dbReference>
<dbReference type="GO" id="GO:0000049">
    <property type="term" value="F:tRNA binding"/>
    <property type="evidence" value="ECO:0007669"/>
    <property type="project" value="UniProtKB-KW"/>
</dbReference>
<dbReference type="GO" id="GO:0006432">
    <property type="term" value="P:phenylalanyl-tRNA aminoacylation"/>
    <property type="evidence" value="ECO:0007669"/>
    <property type="project" value="UniProtKB-UniRule"/>
</dbReference>
<dbReference type="CDD" id="cd00769">
    <property type="entry name" value="PheRS_beta_core"/>
    <property type="match status" value="1"/>
</dbReference>
<dbReference type="CDD" id="cd02796">
    <property type="entry name" value="tRNA_bind_bactPheRS"/>
    <property type="match status" value="1"/>
</dbReference>
<dbReference type="FunFam" id="2.40.50.140:FF:000045">
    <property type="entry name" value="Phenylalanine--tRNA ligase beta subunit"/>
    <property type="match status" value="1"/>
</dbReference>
<dbReference type="FunFam" id="3.30.70.380:FF:000001">
    <property type="entry name" value="Phenylalanine--tRNA ligase beta subunit"/>
    <property type="match status" value="1"/>
</dbReference>
<dbReference type="FunFam" id="3.30.930.10:FF:000130">
    <property type="entry name" value="Phenylalanine--tRNA ligase beta subunit"/>
    <property type="match status" value="1"/>
</dbReference>
<dbReference type="Gene3D" id="3.30.56.10">
    <property type="match status" value="2"/>
</dbReference>
<dbReference type="Gene3D" id="3.30.930.10">
    <property type="entry name" value="Bira Bifunctional Protein, Domain 2"/>
    <property type="match status" value="1"/>
</dbReference>
<dbReference type="Gene3D" id="3.30.70.380">
    <property type="entry name" value="Ferrodoxin-fold anticodon-binding domain"/>
    <property type="match status" value="1"/>
</dbReference>
<dbReference type="Gene3D" id="2.40.50.140">
    <property type="entry name" value="Nucleic acid-binding proteins"/>
    <property type="match status" value="1"/>
</dbReference>
<dbReference type="Gene3D" id="3.50.40.10">
    <property type="entry name" value="Phenylalanyl-trna Synthetase, Chain B, domain 3"/>
    <property type="match status" value="1"/>
</dbReference>
<dbReference type="HAMAP" id="MF_00283">
    <property type="entry name" value="Phe_tRNA_synth_beta1"/>
    <property type="match status" value="1"/>
</dbReference>
<dbReference type="InterPro" id="IPR045864">
    <property type="entry name" value="aa-tRNA-synth_II/BPL/LPL"/>
</dbReference>
<dbReference type="InterPro" id="IPR005146">
    <property type="entry name" value="B3/B4_tRNA-bd"/>
</dbReference>
<dbReference type="InterPro" id="IPR009061">
    <property type="entry name" value="DNA-bd_dom_put_sf"/>
</dbReference>
<dbReference type="InterPro" id="IPR005121">
    <property type="entry name" value="Fdx_antiC-bd"/>
</dbReference>
<dbReference type="InterPro" id="IPR036690">
    <property type="entry name" value="Fdx_antiC-bd_sf"/>
</dbReference>
<dbReference type="InterPro" id="IPR012340">
    <property type="entry name" value="NA-bd_OB-fold"/>
</dbReference>
<dbReference type="InterPro" id="IPR045060">
    <property type="entry name" value="Phe-tRNA-ligase_IIc_bsu"/>
</dbReference>
<dbReference type="InterPro" id="IPR004532">
    <property type="entry name" value="Phe-tRNA-ligase_IIc_bsu_bact"/>
</dbReference>
<dbReference type="InterPro" id="IPR020825">
    <property type="entry name" value="Phe-tRNA_synthase-like_B3/B4"/>
</dbReference>
<dbReference type="InterPro" id="IPR041616">
    <property type="entry name" value="PheRS_beta_core"/>
</dbReference>
<dbReference type="InterPro" id="IPR002547">
    <property type="entry name" value="tRNA-bd_dom"/>
</dbReference>
<dbReference type="InterPro" id="IPR033714">
    <property type="entry name" value="tRNA_bind_bactPheRS"/>
</dbReference>
<dbReference type="InterPro" id="IPR005147">
    <property type="entry name" value="tRNA_synthase_B5-dom"/>
</dbReference>
<dbReference type="NCBIfam" id="TIGR00472">
    <property type="entry name" value="pheT_bact"/>
    <property type="match status" value="1"/>
</dbReference>
<dbReference type="PANTHER" id="PTHR10947:SF0">
    <property type="entry name" value="PHENYLALANINE--TRNA LIGASE BETA SUBUNIT"/>
    <property type="match status" value="1"/>
</dbReference>
<dbReference type="PANTHER" id="PTHR10947">
    <property type="entry name" value="PHENYLALANYL-TRNA SYNTHETASE BETA CHAIN AND LEUCINE-RICH REPEAT-CONTAINING PROTEIN 47"/>
    <property type="match status" value="1"/>
</dbReference>
<dbReference type="Pfam" id="PF03483">
    <property type="entry name" value="B3_4"/>
    <property type="match status" value="1"/>
</dbReference>
<dbReference type="Pfam" id="PF03484">
    <property type="entry name" value="B5"/>
    <property type="match status" value="1"/>
</dbReference>
<dbReference type="Pfam" id="PF03147">
    <property type="entry name" value="FDX-ACB"/>
    <property type="match status" value="1"/>
</dbReference>
<dbReference type="Pfam" id="PF01588">
    <property type="entry name" value="tRNA_bind"/>
    <property type="match status" value="1"/>
</dbReference>
<dbReference type="Pfam" id="PF17759">
    <property type="entry name" value="tRNA_synthFbeta"/>
    <property type="match status" value="1"/>
</dbReference>
<dbReference type="SMART" id="SM00873">
    <property type="entry name" value="B3_4"/>
    <property type="match status" value="1"/>
</dbReference>
<dbReference type="SMART" id="SM00874">
    <property type="entry name" value="B5"/>
    <property type="match status" value="1"/>
</dbReference>
<dbReference type="SMART" id="SM00896">
    <property type="entry name" value="FDX-ACB"/>
    <property type="match status" value="1"/>
</dbReference>
<dbReference type="SUPFAM" id="SSF54991">
    <property type="entry name" value="Anticodon-binding domain of PheRS"/>
    <property type="match status" value="1"/>
</dbReference>
<dbReference type="SUPFAM" id="SSF55681">
    <property type="entry name" value="Class II aaRS and biotin synthetases"/>
    <property type="match status" value="1"/>
</dbReference>
<dbReference type="SUPFAM" id="SSF50249">
    <property type="entry name" value="Nucleic acid-binding proteins"/>
    <property type="match status" value="1"/>
</dbReference>
<dbReference type="SUPFAM" id="SSF56037">
    <property type="entry name" value="PheT/TilS domain"/>
    <property type="match status" value="1"/>
</dbReference>
<dbReference type="SUPFAM" id="SSF46955">
    <property type="entry name" value="Putative DNA-binding domain"/>
    <property type="match status" value="1"/>
</dbReference>
<dbReference type="PROSITE" id="PS51483">
    <property type="entry name" value="B5"/>
    <property type="match status" value="1"/>
</dbReference>
<dbReference type="PROSITE" id="PS51447">
    <property type="entry name" value="FDX_ACB"/>
    <property type="match status" value="1"/>
</dbReference>
<dbReference type="PROSITE" id="PS50886">
    <property type="entry name" value="TRBD"/>
    <property type="match status" value="1"/>
</dbReference>
<name>SYFB_MYCBO</name>